<accession>B7T1R8</accession>
<protein>
    <recommendedName>
        <fullName evidence="1">ATP synthase subunit b, chloroplastic</fullName>
    </recommendedName>
    <alternativeName>
        <fullName evidence="1">ATP synthase F(0) sector subunit b</fullName>
    </alternativeName>
    <alternativeName>
        <fullName evidence="1">ATPase subunit I</fullName>
    </alternativeName>
</protein>
<geneLocation type="chloroplast"/>
<sequence length="178" mass="20779">MKNWISSFILVHQEKSISFNTNILETNLINIIILLIILFYFLKGLLKDNLSSRQENILSTIQNSENRINEANERLVDAKLQWSQAQITLEELKNQTLQNKLILFNAEFEIKNQVLSQHFNNLLMTLYYREQQAFNNIKKQVSELALKKVIAKLQAPLMEEDQSVIIINKIHRLGGNLE</sequence>
<name>ATPF_VAULI</name>
<gene>
    <name evidence="1" type="primary">atpF</name>
</gene>
<dbReference type="EMBL" id="EU912438">
    <property type="protein sequence ID" value="ACF70884.1"/>
    <property type="molecule type" value="Genomic_DNA"/>
</dbReference>
<dbReference type="RefSeq" id="YP_002327467.1">
    <property type="nucleotide sequence ID" value="NC_011600.1"/>
</dbReference>
<dbReference type="SMR" id="B7T1R8"/>
<dbReference type="GeneID" id="7055975"/>
<dbReference type="GO" id="GO:0009535">
    <property type="term" value="C:chloroplast thylakoid membrane"/>
    <property type="evidence" value="ECO:0007669"/>
    <property type="project" value="UniProtKB-SubCell"/>
</dbReference>
<dbReference type="GO" id="GO:0045259">
    <property type="term" value="C:proton-transporting ATP synthase complex"/>
    <property type="evidence" value="ECO:0007669"/>
    <property type="project" value="UniProtKB-KW"/>
</dbReference>
<dbReference type="GO" id="GO:0046933">
    <property type="term" value="F:proton-transporting ATP synthase activity, rotational mechanism"/>
    <property type="evidence" value="ECO:0007669"/>
    <property type="project" value="UniProtKB-UniRule"/>
</dbReference>
<dbReference type="HAMAP" id="MF_01398">
    <property type="entry name" value="ATP_synth_b_bprime"/>
    <property type="match status" value="1"/>
</dbReference>
<dbReference type="InterPro" id="IPR002146">
    <property type="entry name" value="ATP_synth_b/b'su_bac/chlpt"/>
</dbReference>
<dbReference type="PANTHER" id="PTHR34264">
    <property type="entry name" value="ATP SYNTHASE SUBUNIT B, CHLOROPLASTIC"/>
    <property type="match status" value="1"/>
</dbReference>
<dbReference type="PANTHER" id="PTHR34264:SF3">
    <property type="entry name" value="ATP SYNTHASE SUBUNIT B, CHLOROPLASTIC"/>
    <property type="match status" value="1"/>
</dbReference>
<dbReference type="Pfam" id="PF00430">
    <property type="entry name" value="ATP-synt_B"/>
    <property type="match status" value="1"/>
</dbReference>
<organism>
    <name type="scientific">Vaucheria litorea</name>
    <name type="common">Yellow-green alga</name>
    <dbReference type="NCBI Taxonomy" id="109269"/>
    <lineage>
        <taxon>Eukaryota</taxon>
        <taxon>Sar</taxon>
        <taxon>Stramenopiles</taxon>
        <taxon>Ochrophyta</taxon>
        <taxon>PX clade</taxon>
        <taxon>Xanthophyceae</taxon>
        <taxon>Vaucheriales</taxon>
        <taxon>Vaucheriaceae</taxon>
        <taxon>Vaucheria</taxon>
    </lineage>
</organism>
<reference key="1">
    <citation type="journal article" date="2008" name="Proc. Natl. Acad. Sci. U.S.A.">
        <title>Horizontal gene transfer of the algal nuclear gene psbO to the photosynthetic sea slug Elysia chlorotica.</title>
        <authorList>
            <person name="Rumpho M.E."/>
            <person name="Worful J.M."/>
            <person name="Lee J."/>
            <person name="Kannan K."/>
            <person name="Tyler M.S."/>
            <person name="Bhattacharya D."/>
            <person name="Moustafa A."/>
            <person name="Manhart J.R."/>
        </authorList>
    </citation>
    <scope>NUCLEOTIDE SEQUENCE [LARGE SCALE GENOMIC DNA]</scope>
    <source>
        <strain>CCMP2940</strain>
    </source>
</reference>
<evidence type="ECO:0000255" key="1">
    <source>
        <dbReference type="HAMAP-Rule" id="MF_01398"/>
    </source>
</evidence>
<keyword id="KW-0066">ATP synthesis</keyword>
<keyword id="KW-0138">CF(0)</keyword>
<keyword id="KW-0150">Chloroplast</keyword>
<keyword id="KW-0375">Hydrogen ion transport</keyword>
<keyword id="KW-0406">Ion transport</keyword>
<keyword id="KW-0472">Membrane</keyword>
<keyword id="KW-0934">Plastid</keyword>
<keyword id="KW-0793">Thylakoid</keyword>
<keyword id="KW-0812">Transmembrane</keyword>
<keyword id="KW-1133">Transmembrane helix</keyword>
<keyword id="KW-0813">Transport</keyword>
<comment type="function">
    <text evidence="1">F(1)F(0) ATP synthase produces ATP from ADP in the presence of a proton or sodium gradient. F-type ATPases consist of two structural domains, F(1) containing the extramembraneous catalytic core and F(0) containing the membrane proton channel, linked together by a central stalk and a peripheral stalk. During catalysis, ATP synthesis in the catalytic domain of F(1) is coupled via a rotary mechanism of the central stalk subunits to proton translocation.</text>
</comment>
<comment type="function">
    <text evidence="1">Component of the F(0) channel, it forms part of the peripheral stalk, linking F(1) to F(0).</text>
</comment>
<comment type="subunit">
    <text evidence="1">F-type ATPases have 2 components, F(1) - the catalytic core - and F(0) - the membrane proton channel. F(1) has five subunits: alpha(3), beta(3), gamma(1), delta(1), epsilon(1). F(0) has four main subunits: a(1), b(1), b'(1) and c(10-14). The alpha and beta chains form an alternating ring which encloses part of the gamma chain. F(1) is attached to F(0) by a central stalk formed by the gamma and epsilon chains, while a peripheral stalk is formed by the delta, b and b' chains.</text>
</comment>
<comment type="subcellular location">
    <subcellularLocation>
        <location evidence="1">Plastid</location>
        <location evidence="1">Chloroplast thylakoid membrane</location>
        <topology evidence="1">Single-pass membrane protein</topology>
    </subcellularLocation>
</comment>
<comment type="miscellaneous">
    <text>In plastids the F-type ATPase is also known as CF(1)CF(0).</text>
</comment>
<comment type="similarity">
    <text evidence="1">Belongs to the ATPase B chain family.</text>
</comment>
<proteinExistence type="inferred from homology"/>
<feature type="chain" id="PRO_0000368995" description="ATP synthase subunit b, chloroplastic">
    <location>
        <begin position="1"/>
        <end position="178"/>
    </location>
</feature>
<feature type="transmembrane region" description="Helical" evidence="1">
    <location>
        <begin position="26"/>
        <end position="46"/>
    </location>
</feature>